<accession>Q8BK08</accession>
<accession>Q5NCT6</accession>
<reference key="1">
    <citation type="journal article" date="2005" name="Science">
        <title>The transcriptional landscape of the mammalian genome.</title>
        <authorList>
            <person name="Carninci P."/>
            <person name="Kasukawa T."/>
            <person name="Katayama S."/>
            <person name="Gough J."/>
            <person name="Frith M.C."/>
            <person name="Maeda N."/>
            <person name="Oyama R."/>
            <person name="Ravasi T."/>
            <person name="Lenhard B."/>
            <person name="Wells C."/>
            <person name="Kodzius R."/>
            <person name="Shimokawa K."/>
            <person name="Bajic V.B."/>
            <person name="Brenner S.E."/>
            <person name="Batalov S."/>
            <person name="Forrest A.R."/>
            <person name="Zavolan M."/>
            <person name="Davis M.J."/>
            <person name="Wilming L.G."/>
            <person name="Aidinis V."/>
            <person name="Allen J.E."/>
            <person name="Ambesi-Impiombato A."/>
            <person name="Apweiler R."/>
            <person name="Aturaliya R.N."/>
            <person name="Bailey T.L."/>
            <person name="Bansal M."/>
            <person name="Baxter L."/>
            <person name="Beisel K.W."/>
            <person name="Bersano T."/>
            <person name="Bono H."/>
            <person name="Chalk A.M."/>
            <person name="Chiu K.P."/>
            <person name="Choudhary V."/>
            <person name="Christoffels A."/>
            <person name="Clutterbuck D.R."/>
            <person name="Crowe M.L."/>
            <person name="Dalla E."/>
            <person name="Dalrymple B.P."/>
            <person name="de Bono B."/>
            <person name="Della Gatta G."/>
            <person name="di Bernardo D."/>
            <person name="Down T."/>
            <person name="Engstrom P."/>
            <person name="Fagiolini M."/>
            <person name="Faulkner G."/>
            <person name="Fletcher C.F."/>
            <person name="Fukushima T."/>
            <person name="Furuno M."/>
            <person name="Futaki S."/>
            <person name="Gariboldi M."/>
            <person name="Georgii-Hemming P."/>
            <person name="Gingeras T.R."/>
            <person name="Gojobori T."/>
            <person name="Green R.E."/>
            <person name="Gustincich S."/>
            <person name="Harbers M."/>
            <person name="Hayashi Y."/>
            <person name="Hensch T.K."/>
            <person name="Hirokawa N."/>
            <person name="Hill D."/>
            <person name="Huminiecki L."/>
            <person name="Iacono M."/>
            <person name="Ikeo K."/>
            <person name="Iwama A."/>
            <person name="Ishikawa T."/>
            <person name="Jakt M."/>
            <person name="Kanapin A."/>
            <person name="Katoh M."/>
            <person name="Kawasawa Y."/>
            <person name="Kelso J."/>
            <person name="Kitamura H."/>
            <person name="Kitano H."/>
            <person name="Kollias G."/>
            <person name="Krishnan S.P."/>
            <person name="Kruger A."/>
            <person name="Kummerfeld S.K."/>
            <person name="Kurochkin I.V."/>
            <person name="Lareau L.F."/>
            <person name="Lazarevic D."/>
            <person name="Lipovich L."/>
            <person name="Liu J."/>
            <person name="Liuni S."/>
            <person name="McWilliam S."/>
            <person name="Madan Babu M."/>
            <person name="Madera M."/>
            <person name="Marchionni L."/>
            <person name="Matsuda H."/>
            <person name="Matsuzawa S."/>
            <person name="Miki H."/>
            <person name="Mignone F."/>
            <person name="Miyake S."/>
            <person name="Morris K."/>
            <person name="Mottagui-Tabar S."/>
            <person name="Mulder N."/>
            <person name="Nakano N."/>
            <person name="Nakauchi H."/>
            <person name="Ng P."/>
            <person name="Nilsson R."/>
            <person name="Nishiguchi S."/>
            <person name="Nishikawa S."/>
            <person name="Nori F."/>
            <person name="Ohara O."/>
            <person name="Okazaki Y."/>
            <person name="Orlando V."/>
            <person name="Pang K.C."/>
            <person name="Pavan W.J."/>
            <person name="Pavesi G."/>
            <person name="Pesole G."/>
            <person name="Petrovsky N."/>
            <person name="Piazza S."/>
            <person name="Reed J."/>
            <person name="Reid J.F."/>
            <person name="Ring B.Z."/>
            <person name="Ringwald M."/>
            <person name="Rost B."/>
            <person name="Ruan Y."/>
            <person name="Salzberg S.L."/>
            <person name="Sandelin A."/>
            <person name="Schneider C."/>
            <person name="Schoenbach C."/>
            <person name="Sekiguchi K."/>
            <person name="Semple C.A."/>
            <person name="Seno S."/>
            <person name="Sessa L."/>
            <person name="Sheng Y."/>
            <person name="Shibata Y."/>
            <person name="Shimada H."/>
            <person name="Shimada K."/>
            <person name="Silva D."/>
            <person name="Sinclair B."/>
            <person name="Sperling S."/>
            <person name="Stupka E."/>
            <person name="Sugiura K."/>
            <person name="Sultana R."/>
            <person name="Takenaka Y."/>
            <person name="Taki K."/>
            <person name="Tammoja K."/>
            <person name="Tan S.L."/>
            <person name="Tang S."/>
            <person name="Taylor M.S."/>
            <person name="Tegner J."/>
            <person name="Teichmann S.A."/>
            <person name="Ueda H.R."/>
            <person name="van Nimwegen E."/>
            <person name="Verardo R."/>
            <person name="Wei C.L."/>
            <person name="Yagi K."/>
            <person name="Yamanishi H."/>
            <person name="Zabarovsky E."/>
            <person name="Zhu S."/>
            <person name="Zimmer A."/>
            <person name="Hide W."/>
            <person name="Bult C."/>
            <person name="Grimmond S.M."/>
            <person name="Teasdale R.D."/>
            <person name="Liu E.T."/>
            <person name="Brusic V."/>
            <person name="Quackenbush J."/>
            <person name="Wahlestedt C."/>
            <person name="Mattick J.S."/>
            <person name="Hume D.A."/>
            <person name="Kai C."/>
            <person name="Sasaki D."/>
            <person name="Tomaru Y."/>
            <person name="Fukuda S."/>
            <person name="Kanamori-Katayama M."/>
            <person name="Suzuki M."/>
            <person name="Aoki J."/>
            <person name="Arakawa T."/>
            <person name="Iida J."/>
            <person name="Imamura K."/>
            <person name="Itoh M."/>
            <person name="Kato T."/>
            <person name="Kawaji H."/>
            <person name="Kawagashira N."/>
            <person name="Kawashima T."/>
            <person name="Kojima M."/>
            <person name="Kondo S."/>
            <person name="Konno H."/>
            <person name="Nakano K."/>
            <person name="Ninomiya N."/>
            <person name="Nishio T."/>
            <person name="Okada M."/>
            <person name="Plessy C."/>
            <person name="Shibata K."/>
            <person name="Shiraki T."/>
            <person name="Suzuki S."/>
            <person name="Tagami M."/>
            <person name="Waki K."/>
            <person name="Watahiki A."/>
            <person name="Okamura-Oho Y."/>
            <person name="Suzuki H."/>
            <person name="Kawai J."/>
            <person name="Hayashizaki Y."/>
        </authorList>
    </citation>
    <scope>NUCLEOTIDE SEQUENCE [LARGE SCALE MRNA]</scope>
    <source>
        <strain>C57BL/6J</strain>
    </source>
</reference>
<reference key="2">
    <citation type="journal article" date="2009" name="PLoS Biol.">
        <title>Lineage-specific biology revealed by a finished genome assembly of the mouse.</title>
        <authorList>
            <person name="Church D.M."/>
            <person name="Goodstadt L."/>
            <person name="Hillier L.W."/>
            <person name="Zody M.C."/>
            <person name="Goldstein S."/>
            <person name="She X."/>
            <person name="Bult C.J."/>
            <person name="Agarwala R."/>
            <person name="Cherry J.L."/>
            <person name="DiCuccio M."/>
            <person name="Hlavina W."/>
            <person name="Kapustin Y."/>
            <person name="Meric P."/>
            <person name="Maglott D."/>
            <person name="Birtle Z."/>
            <person name="Marques A.C."/>
            <person name="Graves T."/>
            <person name="Zhou S."/>
            <person name="Teague B."/>
            <person name="Potamousis K."/>
            <person name="Churas C."/>
            <person name="Place M."/>
            <person name="Herschleb J."/>
            <person name="Runnheim R."/>
            <person name="Forrest D."/>
            <person name="Amos-Landgraf J."/>
            <person name="Schwartz D.C."/>
            <person name="Cheng Z."/>
            <person name="Lindblad-Toh K."/>
            <person name="Eichler E.E."/>
            <person name="Ponting C.P."/>
        </authorList>
    </citation>
    <scope>NUCLEOTIDE SEQUENCE [LARGE SCALE GENOMIC DNA]</scope>
    <source>
        <strain>C57BL/6J</strain>
    </source>
</reference>
<reference key="3">
    <citation type="journal article" date="2004" name="Genome Res.">
        <title>The status, quality, and expansion of the NIH full-length cDNA project: the Mammalian Gene Collection (MGC).</title>
        <authorList>
            <consortium name="The MGC Project Team"/>
        </authorList>
    </citation>
    <scope>NUCLEOTIDE SEQUENCE [LARGE SCALE MRNA]</scope>
    <source>
        <tissue>Brain</tissue>
    </source>
</reference>
<reference key="4">
    <citation type="journal article" date="2010" name="Cell">
        <title>A tissue-specific atlas of mouse protein phosphorylation and expression.</title>
        <authorList>
            <person name="Huttlin E.L."/>
            <person name="Jedrychowski M.P."/>
            <person name="Elias J.E."/>
            <person name="Goswami T."/>
            <person name="Rad R."/>
            <person name="Beausoleil S.A."/>
            <person name="Villen J."/>
            <person name="Haas W."/>
            <person name="Sowa M.E."/>
            <person name="Gygi S.P."/>
        </authorList>
    </citation>
    <scope>IDENTIFICATION BY MASS SPECTROMETRY [LARGE SCALE ANALYSIS]</scope>
    <source>
        <tissue>Brain</tissue>
        <tissue>Brown adipose tissue</tissue>
        <tissue>Heart</tissue>
        <tissue>Kidney</tissue>
        <tissue>Liver</tissue>
        <tissue>Lung</tissue>
        <tissue>Spleen</tissue>
        <tissue>Testis</tissue>
    </source>
</reference>
<keyword id="KW-0472">Membrane</keyword>
<keyword id="KW-0496">Mitochondrion</keyword>
<keyword id="KW-0999">Mitochondrion inner membrane</keyword>
<keyword id="KW-1185">Reference proteome</keyword>
<keyword id="KW-0812">Transmembrane</keyword>
<keyword id="KW-1133">Transmembrane helix</keyword>
<sequence length="190" mass="21312">MAAWGRRRLGPGGGGSRERVSLSATDCYIVHEIYSGENAQDQFEYELEQALEAQYKYIVIEPTRIGDETARWITVGNCLHKTAVLAGTACLFTPLALPLDYSHYISLPAGVLSLACCTLYGISWQFDPCCKYQVEYDAYKLSRLPLHTLTSSTPVVLVRKDDLHRKRLHNTIALAALVYCVKKVYELYAV</sequence>
<dbReference type="EMBL" id="AK077600">
    <property type="protein sequence ID" value="BAC36891.1"/>
    <property type="molecule type" value="mRNA"/>
</dbReference>
<dbReference type="EMBL" id="AL596215">
    <property type="protein sequence ID" value="CAI35259.1"/>
    <property type="molecule type" value="Genomic_DNA"/>
</dbReference>
<dbReference type="EMBL" id="AL596215">
    <property type="protein sequence ID" value="CAI35260.1"/>
    <property type="status" value="ALT_SEQ"/>
    <property type="molecule type" value="Genomic_DNA"/>
</dbReference>
<dbReference type="EMBL" id="BC048514">
    <property type="protein sequence ID" value="AAH48514.1"/>
    <property type="molecule type" value="mRNA"/>
</dbReference>
<dbReference type="CCDS" id="CCDS24801.1"/>
<dbReference type="RefSeq" id="NP_775655.1">
    <property type="nucleotide sequence ID" value="NM_173453.3"/>
</dbReference>
<dbReference type="BioGRID" id="229795">
    <property type="interactions" value="3"/>
</dbReference>
<dbReference type="FunCoup" id="Q8BK08">
    <property type="interactions" value="1720"/>
</dbReference>
<dbReference type="IntAct" id="Q8BK08">
    <property type="interactions" value="1"/>
</dbReference>
<dbReference type="MINT" id="Q8BK08"/>
<dbReference type="STRING" id="10090.ENSMUSP00000059494"/>
<dbReference type="GlyGen" id="Q8BK08">
    <property type="glycosylation" value="1 site, 1 O-linked glycan (1 site)"/>
</dbReference>
<dbReference type="iPTMnet" id="Q8BK08"/>
<dbReference type="PhosphoSitePlus" id="Q8BK08"/>
<dbReference type="SwissPalm" id="Q8BK08"/>
<dbReference type="jPOST" id="Q8BK08"/>
<dbReference type="PaxDb" id="10090-ENSMUSP00000059494"/>
<dbReference type="PeptideAtlas" id="Q8BK08"/>
<dbReference type="ProteomicsDB" id="259428"/>
<dbReference type="Pumba" id="Q8BK08"/>
<dbReference type="Antibodypedia" id="26137">
    <property type="antibodies" value="68 antibodies from 18 providers"/>
</dbReference>
<dbReference type="DNASU" id="216821"/>
<dbReference type="Ensembl" id="ENSMUST00000062677.12">
    <property type="protein sequence ID" value="ENSMUSP00000059494.6"/>
    <property type="gene ID" value="ENSMUSG00000043284.13"/>
</dbReference>
<dbReference type="GeneID" id="216821"/>
<dbReference type="KEGG" id="mmu:216821"/>
<dbReference type="UCSC" id="uc007jgs.2">
    <property type="organism name" value="mouse"/>
</dbReference>
<dbReference type="AGR" id="MGI:2144726"/>
<dbReference type="CTD" id="8834"/>
<dbReference type="MGI" id="MGI:2144726">
    <property type="gene designation" value="Tmem11"/>
</dbReference>
<dbReference type="VEuPathDB" id="HostDB:ENSMUSG00000043284"/>
<dbReference type="eggNOG" id="ENOG502QUAI">
    <property type="taxonomic scope" value="Eukaryota"/>
</dbReference>
<dbReference type="GeneTree" id="ENSGT00390000006617"/>
<dbReference type="HOGENOM" id="CLU_095460_0_0_1"/>
<dbReference type="InParanoid" id="Q8BK08"/>
<dbReference type="OMA" id="IGNCLHK"/>
<dbReference type="OrthoDB" id="9970856at2759"/>
<dbReference type="PhylomeDB" id="Q8BK08"/>
<dbReference type="TreeFam" id="TF324685"/>
<dbReference type="BioGRID-ORCS" id="216821">
    <property type="hits" value="6 hits in 75 CRISPR screens"/>
</dbReference>
<dbReference type="ChiTaRS" id="Tmem11">
    <property type="organism name" value="mouse"/>
</dbReference>
<dbReference type="PRO" id="PR:Q8BK08"/>
<dbReference type="Proteomes" id="UP000000589">
    <property type="component" value="Chromosome 11"/>
</dbReference>
<dbReference type="RNAct" id="Q8BK08">
    <property type="molecule type" value="protein"/>
</dbReference>
<dbReference type="Bgee" id="ENSMUSG00000043284">
    <property type="expression patterns" value="Expressed in embryonic brain and 261 other cell types or tissues"/>
</dbReference>
<dbReference type="ExpressionAtlas" id="Q8BK08">
    <property type="expression patterns" value="baseline and differential"/>
</dbReference>
<dbReference type="GO" id="GO:0005743">
    <property type="term" value="C:mitochondrial inner membrane"/>
    <property type="evidence" value="ECO:0000250"/>
    <property type="project" value="UniProtKB"/>
</dbReference>
<dbReference type="GO" id="GO:0005739">
    <property type="term" value="C:mitochondrion"/>
    <property type="evidence" value="ECO:0007005"/>
    <property type="project" value="MGI"/>
</dbReference>
<dbReference type="GO" id="GO:0007005">
    <property type="term" value="P:mitochondrion organization"/>
    <property type="evidence" value="ECO:0000250"/>
    <property type="project" value="UniProtKB"/>
</dbReference>
<dbReference type="InterPro" id="IPR026120">
    <property type="entry name" value="TMEM11"/>
</dbReference>
<dbReference type="PANTHER" id="PTHR15099">
    <property type="entry name" value="PROTEIN PM1"/>
    <property type="match status" value="1"/>
</dbReference>
<dbReference type="PANTHER" id="PTHR15099:SF2">
    <property type="entry name" value="TRANSMEMBRANE PROTEIN 11, MITOCHONDRIAL"/>
    <property type="match status" value="1"/>
</dbReference>
<dbReference type="Pfam" id="PF14972">
    <property type="entry name" value="Mito_morph_reg"/>
    <property type="match status" value="1"/>
</dbReference>
<gene>
    <name type="primary">Tmem11</name>
</gene>
<comment type="function">
    <text evidence="1">Plays a role in mitochondrial morphogenesis.</text>
</comment>
<comment type="subunit">
    <text evidence="1">Associates with the mitochondrial contact site and cristae organizing system (MICOS) complex, composed of at least MICOS10/MIC10, CHCHD3/MIC19, CHCHD6/MIC25, APOOL/MIC27, IMMT/MIC60, APOO/MIC23/MIC26 and QIL1/MIC13. This complex was also known under the names MINOS or MitOS complex. The MICOS complex associates with mitochondrial outer membrane proteins SAMM50, MTX1, MTX2 and DNAJC11, mitochondrial inner membrane protein TMEM11 and with HSPA9. Interacts with IMMT/MIC60.</text>
</comment>
<comment type="subcellular location">
    <subcellularLocation>
        <location evidence="1">Mitochondrion inner membrane</location>
        <topology evidence="1">Multi-pass membrane protein</topology>
    </subcellularLocation>
</comment>
<comment type="similarity">
    <text evidence="3">Belongs to the TMEM11 family.</text>
</comment>
<comment type="sequence caution" evidence="3">
    <conflict type="erroneous gene model prediction">
        <sequence resource="EMBL-CDS" id="CAI35260"/>
    </conflict>
</comment>
<name>TMM11_MOUSE</name>
<proteinExistence type="evidence at protein level"/>
<protein>
    <recommendedName>
        <fullName>Transmembrane protein 11, mitochondrial</fullName>
    </recommendedName>
    <alternativeName>
        <fullName>Protein PM1</fullName>
    </alternativeName>
</protein>
<organism>
    <name type="scientific">Mus musculus</name>
    <name type="common">Mouse</name>
    <dbReference type="NCBI Taxonomy" id="10090"/>
    <lineage>
        <taxon>Eukaryota</taxon>
        <taxon>Metazoa</taxon>
        <taxon>Chordata</taxon>
        <taxon>Craniata</taxon>
        <taxon>Vertebrata</taxon>
        <taxon>Euteleostomi</taxon>
        <taxon>Mammalia</taxon>
        <taxon>Eutheria</taxon>
        <taxon>Euarchontoglires</taxon>
        <taxon>Glires</taxon>
        <taxon>Rodentia</taxon>
        <taxon>Myomorpha</taxon>
        <taxon>Muroidea</taxon>
        <taxon>Muridae</taxon>
        <taxon>Murinae</taxon>
        <taxon>Mus</taxon>
        <taxon>Mus</taxon>
    </lineage>
</organism>
<evidence type="ECO:0000250" key="1">
    <source>
        <dbReference type="UniProtKB" id="P17152"/>
    </source>
</evidence>
<evidence type="ECO:0000255" key="2"/>
<evidence type="ECO:0000305" key="3"/>
<feature type="chain" id="PRO_0000072563" description="Transmembrane protein 11, mitochondrial">
    <location>
        <begin position="1"/>
        <end position="190"/>
    </location>
</feature>
<feature type="transmembrane region" description="Helical" evidence="2">
    <location>
        <begin position="84"/>
        <end position="100"/>
    </location>
</feature>
<feature type="transmembrane region" description="Helical" evidence="2">
    <location>
        <begin position="107"/>
        <end position="124"/>
    </location>
</feature>